<feature type="chain" id="PRO_0000265705" description="Elongation factor 4">
    <location>
        <begin position="1"/>
        <end position="599"/>
    </location>
</feature>
<feature type="domain" description="tr-type G">
    <location>
        <begin position="2"/>
        <end position="184"/>
    </location>
</feature>
<feature type="binding site" evidence="1">
    <location>
        <begin position="14"/>
        <end position="19"/>
    </location>
    <ligand>
        <name>GTP</name>
        <dbReference type="ChEBI" id="CHEBI:37565"/>
    </ligand>
</feature>
<feature type="binding site" evidence="1">
    <location>
        <begin position="131"/>
        <end position="134"/>
    </location>
    <ligand>
        <name>GTP</name>
        <dbReference type="ChEBI" id="CHEBI:37565"/>
    </ligand>
</feature>
<dbReference type="EC" id="3.6.5.n1" evidence="1"/>
<dbReference type="EMBL" id="AP008232">
    <property type="protein sequence ID" value="BAE75064.1"/>
    <property type="molecule type" value="Genomic_DNA"/>
</dbReference>
<dbReference type="RefSeq" id="WP_011411613.1">
    <property type="nucleotide sequence ID" value="NC_007712.1"/>
</dbReference>
<dbReference type="SMR" id="Q2NS11"/>
<dbReference type="STRING" id="343509.SG1789"/>
<dbReference type="KEGG" id="sgl:SG1789"/>
<dbReference type="eggNOG" id="COG0481">
    <property type="taxonomic scope" value="Bacteria"/>
</dbReference>
<dbReference type="HOGENOM" id="CLU_009995_3_3_6"/>
<dbReference type="OrthoDB" id="9804431at2"/>
<dbReference type="BioCyc" id="SGLO343509:SGP1_RS16225-MONOMER"/>
<dbReference type="Proteomes" id="UP000001932">
    <property type="component" value="Chromosome"/>
</dbReference>
<dbReference type="GO" id="GO:0005886">
    <property type="term" value="C:plasma membrane"/>
    <property type="evidence" value="ECO:0007669"/>
    <property type="project" value="UniProtKB-SubCell"/>
</dbReference>
<dbReference type="GO" id="GO:0005525">
    <property type="term" value="F:GTP binding"/>
    <property type="evidence" value="ECO:0007669"/>
    <property type="project" value="UniProtKB-UniRule"/>
</dbReference>
<dbReference type="GO" id="GO:0003924">
    <property type="term" value="F:GTPase activity"/>
    <property type="evidence" value="ECO:0007669"/>
    <property type="project" value="UniProtKB-UniRule"/>
</dbReference>
<dbReference type="GO" id="GO:0097216">
    <property type="term" value="F:guanosine tetraphosphate binding"/>
    <property type="evidence" value="ECO:0007669"/>
    <property type="project" value="UniProtKB-ARBA"/>
</dbReference>
<dbReference type="GO" id="GO:0043022">
    <property type="term" value="F:ribosome binding"/>
    <property type="evidence" value="ECO:0007669"/>
    <property type="project" value="UniProtKB-UniRule"/>
</dbReference>
<dbReference type="GO" id="GO:0003746">
    <property type="term" value="F:translation elongation factor activity"/>
    <property type="evidence" value="ECO:0007669"/>
    <property type="project" value="UniProtKB-UniRule"/>
</dbReference>
<dbReference type="GO" id="GO:0045727">
    <property type="term" value="P:positive regulation of translation"/>
    <property type="evidence" value="ECO:0007669"/>
    <property type="project" value="UniProtKB-UniRule"/>
</dbReference>
<dbReference type="CDD" id="cd03699">
    <property type="entry name" value="EF4_II"/>
    <property type="match status" value="1"/>
</dbReference>
<dbReference type="CDD" id="cd16260">
    <property type="entry name" value="EF4_III"/>
    <property type="match status" value="1"/>
</dbReference>
<dbReference type="CDD" id="cd01890">
    <property type="entry name" value="LepA"/>
    <property type="match status" value="1"/>
</dbReference>
<dbReference type="CDD" id="cd03709">
    <property type="entry name" value="lepA_C"/>
    <property type="match status" value="1"/>
</dbReference>
<dbReference type="FunFam" id="3.30.70.240:FF:000005">
    <property type="entry name" value="Elongation factor 4"/>
    <property type="match status" value="1"/>
</dbReference>
<dbReference type="FunFam" id="3.40.50.300:FF:000078">
    <property type="entry name" value="Elongation factor 4"/>
    <property type="match status" value="1"/>
</dbReference>
<dbReference type="FunFam" id="2.40.30.10:FF:000015">
    <property type="entry name" value="Translation factor GUF1, mitochondrial"/>
    <property type="match status" value="1"/>
</dbReference>
<dbReference type="FunFam" id="3.30.70.2570:FF:000001">
    <property type="entry name" value="Translation factor GUF1, mitochondrial"/>
    <property type="match status" value="1"/>
</dbReference>
<dbReference type="FunFam" id="3.30.70.870:FF:000004">
    <property type="entry name" value="Translation factor GUF1, mitochondrial"/>
    <property type="match status" value="1"/>
</dbReference>
<dbReference type="Gene3D" id="3.30.70.240">
    <property type="match status" value="1"/>
</dbReference>
<dbReference type="Gene3D" id="3.30.70.2570">
    <property type="entry name" value="Elongation factor 4, C-terminal domain"/>
    <property type="match status" value="1"/>
</dbReference>
<dbReference type="Gene3D" id="3.30.70.870">
    <property type="entry name" value="Elongation Factor G (Translational Gtpase), domain 3"/>
    <property type="match status" value="1"/>
</dbReference>
<dbReference type="Gene3D" id="3.40.50.300">
    <property type="entry name" value="P-loop containing nucleotide triphosphate hydrolases"/>
    <property type="match status" value="1"/>
</dbReference>
<dbReference type="Gene3D" id="2.40.30.10">
    <property type="entry name" value="Translation factors"/>
    <property type="match status" value="1"/>
</dbReference>
<dbReference type="HAMAP" id="MF_00071">
    <property type="entry name" value="LepA"/>
    <property type="match status" value="1"/>
</dbReference>
<dbReference type="InterPro" id="IPR006297">
    <property type="entry name" value="EF-4"/>
</dbReference>
<dbReference type="InterPro" id="IPR035647">
    <property type="entry name" value="EFG_III/V"/>
</dbReference>
<dbReference type="InterPro" id="IPR000640">
    <property type="entry name" value="EFG_V-like"/>
</dbReference>
<dbReference type="InterPro" id="IPR004161">
    <property type="entry name" value="EFTu-like_2"/>
</dbReference>
<dbReference type="InterPro" id="IPR031157">
    <property type="entry name" value="G_TR_CS"/>
</dbReference>
<dbReference type="InterPro" id="IPR038363">
    <property type="entry name" value="LepA_C_sf"/>
</dbReference>
<dbReference type="InterPro" id="IPR013842">
    <property type="entry name" value="LepA_CTD"/>
</dbReference>
<dbReference type="InterPro" id="IPR035654">
    <property type="entry name" value="LepA_IV"/>
</dbReference>
<dbReference type="InterPro" id="IPR027417">
    <property type="entry name" value="P-loop_NTPase"/>
</dbReference>
<dbReference type="InterPro" id="IPR005225">
    <property type="entry name" value="Small_GTP-bd"/>
</dbReference>
<dbReference type="InterPro" id="IPR000795">
    <property type="entry name" value="T_Tr_GTP-bd_dom"/>
</dbReference>
<dbReference type="NCBIfam" id="TIGR01393">
    <property type="entry name" value="lepA"/>
    <property type="match status" value="1"/>
</dbReference>
<dbReference type="NCBIfam" id="TIGR00231">
    <property type="entry name" value="small_GTP"/>
    <property type="match status" value="1"/>
</dbReference>
<dbReference type="PANTHER" id="PTHR43512:SF4">
    <property type="entry name" value="TRANSLATION FACTOR GUF1 HOMOLOG, CHLOROPLASTIC"/>
    <property type="match status" value="1"/>
</dbReference>
<dbReference type="PANTHER" id="PTHR43512">
    <property type="entry name" value="TRANSLATION FACTOR GUF1-RELATED"/>
    <property type="match status" value="1"/>
</dbReference>
<dbReference type="Pfam" id="PF00679">
    <property type="entry name" value="EFG_C"/>
    <property type="match status" value="1"/>
</dbReference>
<dbReference type="Pfam" id="PF00009">
    <property type="entry name" value="GTP_EFTU"/>
    <property type="match status" value="1"/>
</dbReference>
<dbReference type="Pfam" id="PF03144">
    <property type="entry name" value="GTP_EFTU_D2"/>
    <property type="match status" value="1"/>
</dbReference>
<dbReference type="Pfam" id="PF06421">
    <property type="entry name" value="LepA_C"/>
    <property type="match status" value="1"/>
</dbReference>
<dbReference type="PRINTS" id="PR00315">
    <property type="entry name" value="ELONGATNFCT"/>
</dbReference>
<dbReference type="SUPFAM" id="SSF54980">
    <property type="entry name" value="EF-G C-terminal domain-like"/>
    <property type="match status" value="2"/>
</dbReference>
<dbReference type="SUPFAM" id="SSF52540">
    <property type="entry name" value="P-loop containing nucleoside triphosphate hydrolases"/>
    <property type="match status" value="1"/>
</dbReference>
<dbReference type="PROSITE" id="PS00301">
    <property type="entry name" value="G_TR_1"/>
    <property type="match status" value="1"/>
</dbReference>
<dbReference type="PROSITE" id="PS51722">
    <property type="entry name" value="G_TR_2"/>
    <property type="match status" value="1"/>
</dbReference>
<sequence length="599" mass="66352">MKNIRNFSIIAHIDHGKSTLSDRLIQTCGGLSEREMAAQVLDSMDLERERGITIKAQSVTLDYKAPDGQVYQLNFIDTPGHVDFSYEVSRSLAACEGALLVVDAGQGVEAQTLANCYTAMEMDLEVVPVLNKIDLPAADPDRVAQEIEDIVGIDATDAVRCSAKTGVGVPDVLERLVRDIPPPEGDPAAPLQALIIDSWFDNYLGVVSLVRIKNGTLRKGDKIKVMSTGQLYNADRLGIFTPKRIDREVLNCGEVGWLVCAIKDIHGAPVGDTLTLARQPADKVLPGFKKVKPQVYAGLFPVSSDDYEAFRDALGKLSLNDASLFYEPESSTALGFGFRCGFLGLLHMEIIQERLEREYDLDLITTAPTVIYEVLTTDNTTVYVDSPSKLPPLNGINELREPVAECHMLLPQAYLGNVITLCIEKRGVQTNMVYHGSQVALTYEIPMVEVVLDFFDRLKSTSRGYASLDYGFKRFQNSDMVRVDVLINGERVDALALITHRDNAPYRGREFVDKLQELIPRQQFDIAIQAAIGNHIIARSTVKQLRKNVLAKCYGGDVSRKKKLLQKQKEGKKRMKQVGNVELPQEAFLAILHVGKDSK</sequence>
<evidence type="ECO:0000255" key="1">
    <source>
        <dbReference type="HAMAP-Rule" id="MF_00071"/>
    </source>
</evidence>
<proteinExistence type="inferred from homology"/>
<comment type="function">
    <text evidence="1">Required for accurate and efficient protein synthesis under certain stress conditions. May act as a fidelity factor of the translation reaction, by catalyzing a one-codon backward translocation of tRNAs on improperly translocated ribosomes. Back-translocation proceeds from a post-translocation (POST) complex to a pre-translocation (PRE) complex, thus giving elongation factor G a second chance to translocate the tRNAs correctly. Binds to ribosomes in a GTP-dependent manner.</text>
</comment>
<comment type="catalytic activity">
    <reaction evidence="1">
        <text>GTP + H2O = GDP + phosphate + H(+)</text>
        <dbReference type="Rhea" id="RHEA:19669"/>
        <dbReference type="ChEBI" id="CHEBI:15377"/>
        <dbReference type="ChEBI" id="CHEBI:15378"/>
        <dbReference type="ChEBI" id="CHEBI:37565"/>
        <dbReference type="ChEBI" id="CHEBI:43474"/>
        <dbReference type="ChEBI" id="CHEBI:58189"/>
        <dbReference type="EC" id="3.6.5.n1"/>
    </reaction>
</comment>
<comment type="subcellular location">
    <subcellularLocation>
        <location evidence="1">Cell inner membrane</location>
        <topology evidence="1">Peripheral membrane protein</topology>
        <orientation evidence="1">Cytoplasmic side</orientation>
    </subcellularLocation>
</comment>
<comment type="similarity">
    <text evidence="1">Belongs to the TRAFAC class translation factor GTPase superfamily. Classic translation factor GTPase family. LepA subfamily.</text>
</comment>
<accession>Q2NS11</accession>
<protein>
    <recommendedName>
        <fullName evidence="1">Elongation factor 4</fullName>
        <shortName evidence="1">EF-4</shortName>
        <ecNumber evidence="1">3.6.5.n1</ecNumber>
    </recommendedName>
    <alternativeName>
        <fullName evidence="1">Ribosomal back-translocase LepA</fullName>
    </alternativeName>
</protein>
<name>LEPA_SODGM</name>
<organism>
    <name type="scientific">Sodalis glossinidius (strain morsitans)</name>
    <dbReference type="NCBI Taxonomy" id="343509"/>
    <lineage>
        <taxon>Bacteria</taxon>
        <taxon>Pseudomonadati</taxon>
        <taxon>Pseudomonadota</taxon>
        <taxon>Gammaproteobacteria</taxon>
        <taxon>Enterobacterales</taxon>
        <taxon>Bruguierivoracaceae</taxon>
        <taxon>Sodalis</taxon>
    </lineage>
</organism>
<gene>
    <name evidence="1" type="primary">lepA</name>
    <name type="ordered locus">SG1789</name>
</gene>
<reference key="1">
    <citation type="journal article" date="2006" name="Genome Res.">
        <title>Massive genome erosion and functional adaptations provide insights into the symbiotic lifestyle of Sodalis glossinidius in the tsetse host.</title>
        <authorList>
            <person name="Toh H."/>
            <person name="Weiss B.L."/>
            <person name="Perkin S.A.H."/>
            <person name="Yamashita A."/>
            <person name="Oshima K."/>
            <person name="Hattori M."/>
            <person name="Aksoy S."/>
        </authorList>
    </citation>
    <scope>NUCLEOTIDE SEQUENCE [LARGE SCALE GENOMIC DNA]</scope>
    <source>
        <strain>morsitans</strain>
    </source>
</reference>
<keyword id="KW-0997">Cell inner membrane</keyword>
<keyword id="KW-1003">Cell membrane</keyword>
<keyword id="KW-0342">GTP-binding</keyword>
<keyword id="KW-0378">Hydrolase</keyword>
<keyword id="KW-0472">Membrane</keyword>
<keyword id="KW-0547">Nucleotide-binding</keyword>
<keyword id="KW-0648">Protein biosynthesis</keyword>